<feature type="chain" id="PRO_0000068566" description="16S rRNA (adenine(1408)-N(1))-methyltransferase">
    <location>
        <begin position="1"/>
        <end position="215"/>
    </location>
</feature>
<feature type="binding site" evidence="5">
    <location>
        <position position="32"/>
    </location>
    <ligand>
        <name>S-adenosyl-L-methionine</name>
        <dbReference type="ChEBI" id="CHEBI:59789"/>
    </ligand>
</feature>
<feature type="binding site" evidence="5">
    <location>
        <position position="55"/>
    </location>
    <ligand>
        <name>S-adenosyl-L-methionine</name>
        <dbReference type="ChEBI" id="CHEBI:59789"/>
    </ligand>
</feature>
<feature type="binding site" evidence="5">
    <location>
        <begin position="87"/>
        <end position="88"/>
    </location>
    <ligand>
        <name>S-adenosyl-L-methionine</name>
        <dbReference type="ChEBI" id="CHEBI:59789"/>
    </ligand>
</feature>
<feature type="binding site" evidence="5">
    <location>
        <begin position="102"/>
        <end position="107"/>
    </location>
    <ligand>
        <name>S-adenosyl-L-methionine</name>
        <dbReference type="ChEBI" id="CHEBI:59789"/>
    </ligand>
</feature>
<feature type="binding site" evidence="5">
    <location>
        <begin position="191"/>
        <end position="193"/>
    </location>
    <ligand>
        <name>S-adenosyl-L-methionine</name>
        <dbReference type="ChEBI" id="CHEBI:59789"/>
    </ligand>
</feature>
<feature type="mutagenesis site" description="No change in kanamycin resistance." evidence="2">
    <original>R</original>
    <variation>A</variation>
    <location>
        <position position="8"/>
    </location>
</feature>
<feature type="mutagenesis site" description="Loss of kanamycin resistance." evidence="2">
    <original>D</original>
    <variation>A</variation>
    <location>
        <position position="30"/>
    </location>
</feature>
<feature type="mutagenesis site" description="Loss of kanamycin resistance." evidence="2">
    <original>K</original>
    <variation>A</variation>
    <location>
        <position position="37"/>
    </location>
</feature>
<feature type="mutagenesis site" description="Loss of kanamycin resistance." evidence="2">
    <original>D</original>
    <variation>A</variation>
    <location>
        <position position="55"/>
    </location>
</feature>
<feature type="mutagenesis site" description="Decrease in kanamycin resistance." evidence="2">
    <original>K</original>
    <variation>A</variation>
    <location>
        <position position="58"/>
    </location>
</feature>
<feature type="mutagenesis site" description="Decrease in kanamycin resistance." evidence="2">
    <original>R</original>
    <variation>A</variation>
    <location>
        <position position="60"/>
    </location>
</feature>
<feature type="mutagenesis site" description="Decrease in kanamycin resistance." evidence="2">
    <original>K</original>
    <variation>A</variation>
    <location>
        <position position="63"/>
    </location>
</feature>
<feature type="mutagenesis site" description="Decrease in kanamycin resistance." evidence="2">
    <original>K</original>
    <variation>A</variation>
    <location>
        <position position="67"/>
    </location>
</feature>
<feature type="mutagenesis site" description="Decrease in kanamycin resistance." evidence="2">
    <original>K</original>
    <variation>A</variation>
    <location>
        <position position="71"/>
    </location>
</feature>
<feature type="mutagenesis site" description="Decrease in kanamycin resistance." evidence="2">
    <original>K</original>
    <variation>A</variation>
    <location>
        <position position="74"/>
    </location>
</feature>
<feature type="mutagenesis site" description="Decrease in kanamycin resistance." evidence="2">
    <original>E</original>
    <variation>A</variation>
    <location>
        <position position="88"/>
    </location>
</feature>
<feature type="mutagenesis site" description="Loss of kanamycin resistance." evidence="2">
    <original>W</original>
    <variation>A</variation>
    <variation>F</variation>
    <location>
        <position position="105"/>
    </location>
</feature>
<feature type="mutagenesis site" description="Decrease in kanamycin resistance." evidence="2">
    <original>S</original>
    <variation>A</variation>
    <location>
        <position position="107"/>
    </location>
</feature>
<feature type="mutagenesis site" description="Decrease in kanamycin resistance." evidence="2">
    <original>N</original>
    <variation>A</variation>
    <location>
        <position position="138"/>
    </location>
</feature>
<feature type="mutagenesis site" description="No change in kanamycin resistance." evidence="2">
    <original>K</original>
    <variation>A</variation>
    <location>
        <position position="174"/>
    </location>
</feature>
<feature type="mutagenesis site" description="Decrease in kanamycin resistance." evidence="2">
    <original>R</original>
    <variation>A</variation>
    <location>
        <position position="179"/>
    </location>
</feature>
<feature type="mutagenesis site" description="Loss of kanamycin resistance." evidence="2">
    <original>T</original>
    <variation>A</variation>
    <location>
        <position position="191"/>
    </location>
</feature>
<feature type="mutagenesis site" description="Loss of kanamycin resistance." evidence="2">
    <original>W</original>
    <variation>A</variation>
    <variation>F</variation>
    <location>
        <position position="193"/>
    </location>
</feature>
<feature type="mutagenesis site" description="Decrease in kanamycin resistance." evidence="2">
    <original>R</original>
    <variation>A</variation>
    <location>
        <position position="195"/>
    </location>
</feature>
<feature type="mutagenesis site" description="Loss of kanamycin resistance." evidence="2">
    <original>R</original>
    <variation>A</variation>
    <location>
        <position position="196"/>
    </location>
</feature>
<feature type="mutagenesis site" description="Loss of kanamycin resistance." evidence="2">
    <original>R</original>
    <variation>A</variation>
    <location>
        <position position="201"/>
    </location>
</feature>
<feature type="mutagenesis site" description="Decrease in kanamycin resistance." evidence="2">
    <original>R</original>
    <variation>A</variation>
    <location>
        <position position="203"/>
    </location>
</feature>
<feature type="sequence conflict" description="In Ref. 1; AAA26774." evidence="4" ref="1">
    <original>GG</original>
    <variation>A</variation>
    <location>
        <begin position="75"/>
        <end position="76"/>
    </location>
</feature>
<feature type="sequence conflict" description="In Ref. 1; AAA26774." evidence="4" ref="1">
    <original>ALNLHAWRPS</original>
    <variation>ECNRSCRGPP</variation>
    <location>
        <begin position="136"/>
        <end position="145"/>
    </location>
</feature>
<sequence>MRRVVGKRVQEFSDAEFEQLRSQYDDVVLDVGTGDGKHPYKVARQNPSRLVVALDADKSRMEKISAKAAAKPAKGGLPNLLYLWATAERLPPLSGVGELHVLMPWGSLLRGVLGSSPEMLRGMAAVCRPGASFLVALNLHAWRPSVPEVGEHPEPTPDSADEWLAPRYAEAGWKLADCRYLEPEEVAGLETSWTRRLHSSRDRFDVLALTGTISP</sequence>
<keyword id="KW-0002">3D-structure</keyword>
<keyword id="KW-0046">Antibiotic resistance</keyword>
<keyword id="KW-0489">Methyltransferase</keyword>
<keyword id="KW-0949">S-adenosyl-L-methionine</keyword>
<keyword id="KW-0808">Transferase</keyword>
<evidence type="ECO:0000269" key="1">
    <source>
    </source>
</evidence>
<evidence type="ECO:0000269" key="2">
    <source>
    </source>
</evidence>
<evidence type="ECO:0000269" key="3">
    <source>
    </source>
</evidence>
<evidence type="ECO:0000305" key="4"/>
<evidence type="ECO:0000305" key="5">
    <source>
    </source>
</evidence>
<accession>P25920</accession>
<accession>Q2MFK4</accession>
<dbReference type="EC" id="2.1.1.180"/>
<dbReference type="EMBL" id="M64625">
    <property type="protein sequence ID" value="AAA26774.1"/>
    <property type="status" value="ALT_INIT"/>
    <property type="molecule type" value="Genomic_DNA"/>
</dbReference>
<dbReference type="EMBL" id="AJ629123">
    <property type="protein sequence ID" value="CAF33037.1"/>
    <property type="status" value="ALT_INIT"/>
    <property type="molecule type" value="Genomic_DNA"/>
</dbReference>
<dbReference type="PIR" id="JQ1137">
    <property type="entry name" value="JQ1137"/>
</dbReference>
<dbReference type="RefSeq" id="WP_063964000.1">
    <property type="nucleotide sequence ID" value="NG_050561.1"/>
</dbReference>
<dbReference type="PDB" id="3MQ2">
    <property type="method" value="X-ray"/>
    <property type="resolution" value="1.69 A"/>
    <property type="chains" value="A/B=1-215"/>
</dbReference>
<dbReference type="PDBsum" id="3MQ2"/>
<dbReference type="SMR" id="P25920"/>
<dbReference type="CARD" id="ARO:3004102">
    <property type="molecule name" value="kamB"/>
    <property type="mechanism identifier" value="ARO:0001001"/>
    <property type="mechanism name" value="antibiotic target alteration"/>
</dbReference>
<dbReference type="BRENDA" id="2.1.1.180">
    <property type="organism ID" value="7970"/>
</dbReference>
<dbReference type="GO" id="GO:0008168">
    <property type="term" value="F:methyltransferase activity"/>
    <property type="evidence" value="ECO:0007669"/>
    <property type="project" value="UniProtKB-KW"/>
</dbReference>
<dbReference type="GO" id="GO:0032259">
    <property type="term" value="P:methylation"/>
    <property type="evidence" value="ECO:0007669"/>
    <property type="project" value="UniProtKB-KW"/>
</dbReference>
<dbReference type="GO" id="GO:0046677">
    <property type="term" value="P:response to antibiotic"/>
    <property type="evidence" value="ECO:0007669"/>
    <property type="project" value="UniProtKB-KW"/>
</dbReference>
<dbReference type="Gene3D" id="3.40.50.150">
    <property type="entry name" value="Vaccinia Virus protein VP39"/>
    <property type="match status" value="1"/>
</dbReference>
<dbReference type="InterPro" id="IPR056262">
    <property type="entry name" value="NpmA"/>
</dbReference>
<dbReference type="InterPro" id="IPR029063">
    <property type="entry name" value="SAM-dependent_MTases_sf"/>
</dbReference>
<dbReference type="NCBIfam" id="NF000363">
    <property type="entry name" value="self_KamB"/>
    <property type="match status" value="1"/>
</dbReference>
<dbReference type="Pfam" id="PF24675">
    <property type="entry name" value="NpmA"/>
    <property type="match status" value="1"/>
</dbReference>
<dbReference type="SUPFAM" id="SSF53335">
    <property type="entry name" value="S-adenosyl-L-methionine-dependent methyltransferases"/>
    <property type="match status" value="1"/>
</dbReference>
<gene>
    <name type="primary">kamB</name>
</gene>
<reference key="1">
    <citation type="journal article" date="1991" name="Gene">
        <title>Cloning of an aminoglycoside-resistance-encoding gene, kamC, from Saccharopolyspora hirsuta: comparison with kamB from Streptomyces tenebrarius.</title>
        <authorList>
            <person name="Holmes D.J."/>
            <person name="Drocourt D."/>
            <person name="Tiraby G."/>
            <person name="Cundiffe E."/>
        </authorList>
    </citation>
    <scope>NUCLEOTIDE SEQUENCE [GENOMIC DNA]</scope>
    <source>
        <strain>ATCC 17920 / DSM 40477 / JCM 4838 / CBS 697.72 / NBRC 16177 / NCIMB 11028 / NRRL B-12390 / A12253. 1 / ISP 5477</strain>
    </source>
</reference>
<reference key="2">
    <citation type="submission" date="2004-02" db="EMBL/GenBank/DDBJ databases">
        <title>Comparison of the 'mixed' gene clusters for the biosynthesis of the aminoglycoside antibiotics apramycin (Streptomyces tenebrarius DSM 40477) and hygromycin B (Streptomyces hygroscopicus subsp. hygroscopicus DSM 40578), which contain genes related to both the biosynthesis of other aminoglycosides and cell-wall sugars.</title>
        <authorList>
            <person name="Aboshanab K.M."/>
            <person name="Schmidt-Beissner H."/>
            <person name="Wehmeier U.F."/>
            <person name="Welzel K."/>
            <person name="Vente A."/>
            <person name="Piepersberg W."/>
        </authorList>
    </citation>
    <scope>NUCLEOTIDE SEQUENCE [GENOMIC DNA]</scope>
    <source>
        <strain>ATCC 17920 / DSM 40477 / JCM 4838 / CBS 697.72 / NBRC 16177 / NCIMB 11028 / NRRL B-12390 / A12253. 1 / ISP 5477</strain>
    </source>
</reference>
<reference key="3">
    <citation type="journal article" date="2009" name="Nucleic Acids Res.">
        <title>Determination of the target nucleosides for members of two families of 16S rRNA methyltransferases that confer resistance to partially overlapping groups of aminoglycoside antibiotics.</title>
        <authorList>
            <person name="Savic M."/>
            <person name="Lovric J."/>
            <person name="Tomic T.I."/>
            <person name="Vasiljevic B."/>
            <person name="Conn G.L."/>
        </authorList>
    </citation>
    <scope>FUNCTION IN ANTIBIOTIC RESISTANCE</scope>
    <scope>IDENTIFICATION OF START SITE</scope>
</reference>
<reference key="4">
    <citation type="journal article" date="2011" name="Protein Expr. Purif.">
        <title>Expression, purification and crystallization of adenosine 1408 aminoglycoside-resistance rRNA methyltransferases for structural studies.</title>
        <authorList>
            <person name="Zelinskaya N."/>
            <person name="Rankin C.R."/>
            <person name="Macmaster R."/>
            <person name="Savic M."/>
            <person name="Conn G.L."/>
        </authorList>
    </citation>
    <scope>FUNCTION</scope>
    <scope>CRYSTALLIZATION</scope>
</reference>
<reference key="5">
    <citation type="journal article" date="2010" name="Nucleic Acids Res.">
        <title>Structural insights into the function of aminoglycoside-resistance A1408 16S rRNA methyltransferases from antibiotic-producing and human pathogenic bacteria.</title>
        <authorList>
            <person name="Macmaster R."/>
            <person name="Zelinskaya N."/>
            <person name="Savic M."/>
            <person name="Rankin C.R."/>
            <person name="Conn G.L."/>
        </authorList>
    </citation>
    <scope>X-RAY CRYSTALLOGRAPHY (1.69 ANGSTROMS) IN COMPLEX WITH S-ADENOSYL-L-HOMOCYSTEINE</scope>
    <scope>FUNCTION</scope>
    <scope>MUTAGENESIS OF ARG-8; ASP-30; LYS-37; ASP-55; LYS-58; ARG-60; LYS-63; LYS-67; LYS-71; LYS-74; GLU-88; TRP-105; SER-107; ASN-138; LYS-174; ARG-179; THR-191; TRP-193; ARG-195; ARG-196; ARG-201 AND ARG-203</scope>
    <source>
        <strain>ATCC 17920 / DSM 40477 / JCM 4838 / CBS 697.72 / NBRC 16177 / NCIMB 11028 / NRRL B-12390 / A12253. 1 / ISP 5477</strain>
    </source>
</reference>
<protein>
    <recommendedName>
        <fullName>16S rRNA (adenine(1408)-N(1))-methyltransferase</fullName>
        <ecNumber>2.1.1.180</ecNumber>
    </recommendedName>
    <alternativeName>
        <fullName>16S rRNA m1A1408 methyltransferase</fullName>
    </alternativeName>
    <alternativeName>
        <fullName>Kanamycin-apramycin resistance methylase</fullName>
    </alternativeName>
</protein>
<proteinExistence type="evidence at protein level"/>
<comment type="function">
    <text evidence="1 2 3">Specifically methylates the N(1) position of adenine 1408 in 16S rRNA. Confers resistance to various aminoglycosides, including kanamycin, neomycin and apramycin.</text>
</comment>
<comment type="catalytic activity">
    <reaction>
        <text>adenosine(1408) in 16S rRNA + S-adenosyl-L-methionine = N(1)-methyladenosine(1408) in 16S rRNA + S-adenosyl-L-homocysteine + H(+)</text>
        <dbReference type="Rhea" id="RHEA:42776"/>
        <dbReference type="Rhea" id="RHEA-COMP:10227"/>
        <dbReference type="Rhea" id="RHEA-COMP:10228"/>
        <dbReference type="ChEBI" id="CHEBI:15378"/>
        <dbReference type="ChEBI" id="CHEBI:57856"/>
        <dbReference type="ChEBI" id="CHEBI:59789"/>
        <dbReference type="ChEBI" id="CHEBI:74411"/>
        <dbReference type="ChEBI" id="CHEBI:74491"/>
        <dbReference type="EC" id="2.1.1.180"/>
    </reaction>
</comment>
<comment type="miscellaneous">
    <text>Protects Streptomyces, which is an antibiotic-producing bacterium, against self-intoxication.</text>
</comment>
<comment type="similarity">
    <text evidence="4">Belongs to the methyltransferase superfamily. Kanamycin-apramycin resistance family.</text>
</comment>
<comment type="sequence caution" evidence="4">
    <conflict type="erroneous initiation">
        <sequence resource="EMBL-CDS" id="AAA26774"/>
    </conflict>
    <text>Truncated N-terminus.</text>
</comment>
<comment type="sequence caution" evidence="4">
    <conflict type="erroneous initiation">
        <sequence resource="EMBL-CDS" id="CAF33037"/>
    </conflict>
    <text>Truncated N-terminus.</text>
</comment>
<name>KAMB_STRSD</name>
<organism>
    <name type="scientific">Streptoalloteichus tenebrarius (strain ATCC 17920 / DSM 40477 / JCM 4838 / CBS 697.72 / NBRC 16177 / NCIMB 11028 / NRRL B-12390 / A12253. 1 / ISP 5477)</name>
    <name type="common">Streptomyces tenebrarius</name>
    <dbReference type="NCBI Taxonomy" id="1933"/>
    <lineage>
        <taxon>Bacteria</taxon>
        <taxon>Bacillati</taxon>
        <taxon>Actinomycetota</taxon>
        <taxon>Actinomycetes</taxon>
        <taxon>Pseudonocardiales</taxon>
        <taxon>Pseudonocardiaceae</taxon>
        <taxon>Streptoalloteichus</taxon>
    </lineage>
</organism>